<feature type="chain" id="PRO_0000306394" description="Leukocyte receptor cluster member 8 homolog">
    <location>
        <begin position="1"/>
        <end position="800"/>
    </location>
</feature>
<feature type="domain" description="PCI" evidence="1">
    <location>
        <begin position="636"/>
        <end position="800"/>
    </location>
</feature>
<feature type="region of interest" description="Disordered" evidence="2">
    <location>
        <begin position="118"/>
        <end position="149"/>
    </location>
</feature>
<feature type="region of interest" description="Disordered" evidence="2">
    <location>
        <begin position="175"/>
        <end position="229"/>
    </location>
</feature>
<feature type="region of interest" description="Disordered" evidence="2">
    <location>
        <begin position="245"/>
        <end position="273"/>
    </location>
</feature>
<feature type="region of interest" description="Disordered" evidence="2">
    <location>
        <begin position="335"/>
        <end position="394"/>
    </location>
</feature>
<feature type="region of interest" description="Disordered" evidence="2">
    <location>
        <begin position="407"/>
        <end position="519"/>
    </location>
</feature>
<feature type="compositionally biased region" description="Low complexity" evidence="2">
    <location>
        <begin position="120"/>
        <end position="131"/>
    </location>
</feature>
<feature type="compositionally biased region" description="Low complexity" evidence="2">
    <location>
        <begin position="184"/>
        <end position="201"/>
    </location>
</feature>
<feature type="compositionally biased region" description="Polar residues" evidence="2">
    <location>
        <begin position="252"/>
        <end position="261"/>
    </location>
</feature>
<feature type="compositionally biased region" description="Basic and acidic residues" evidence="2">
    <location>
        <begin position="338"/>
        <end position="352"/>
    </location>
</feature>
<feature type="compositionally biased region" description="Polar residues" evidence="2">
    <location>
        <begin position="360"/>
        <end position="387"/>
    </location>
</feature>
<feature type="compositionally biased region" description="Low complexity" evidence="2">
    <location>
        <begin position="409"/>
        <end position="418"/>
    </location>
</feature>
<feature type="compositionally biased region" description="Basic residues" evidence="2">
    <location>
        <begin position="419"/>
        <end position="433"/>
    </location>
</feature>
<feature type="compositionally biased region" description="Basic residues" evidence="2">
    <location>
        <begin position="508"/>
        <end position="519"/>
    </location>
</feature>
<evidence type="ECO:0000255" key="1">
    <source>
        <dbReference type="PROSITE-ProRule" id="PRU01185"/>
    </source>
</evidence>
<evidence type="ECO:0000256" key="2">
    <source>
        <dbReference type="SAM" id="MobiDB-lite"/>
    </source>
</evidence>
<protein>
    <recommendedName>
        <fullName>Leukocyte receptor cluster member 8 homolog</fullName>
    </recommendedName>
</protein>
<name>LENG8_XENLA</name>
<accession>Q32NW2</accession>
<keyword id="KW-1185">Reference proteome</keyword>
<reference key="1">
    <citation type="submission" date="2005-11" db="EMBL/GenBank/DDBJ databases">
        <authorList>
            <consortium name="NIH - Xenopus Gene Collection (XGC) project"/>
        </authorList>
    </citation>
    <scope>NUCLEOTIDE SEQUENCE [LARGE SCALE MRNA]</scope>
    <source>
        <tissue>Testis</tissue>
    </source>
</reference>
<sequence length="800" mass="90326">MAANLGEPINNEWVQQYNSGVNRESGMELPMQENPEWEKARQALASISKANATSADKGSESGQTNSQFVSQQGEAILQQQQYYQWYSQYNYSYPYNYYYQMNMYNGYNTPGQYGMPGNYQSMSSQSGQHQGNLAQPPVPGLEDSSMSYSNVQSPVSLCNTQTASHQQVNHSMTKPCIQGRNAGNQSNPHSSSNQPNYSQQSFNEGPKQKKGQQLWNRMKHAPGSGGFKFNIQKRPLVMANQNFASSEHHDNSAGQQQQQATHMHHPLQQPQQQPTIEKITEHGNNSSKPEDWPQAMKEYVQRCFTSCESEEDKDRTEKLLKEVLQARLQDGSAYTIDWSREPLPGKDGGKESPKKKRWEQTTLQTSHGSTITITQSPRGGGNSTNAATLRGRGSFIKKFGNRNVFMKESSSSSSAGSRSRSRSPSHSPHRRYRRSDSDSDSAYSGNETRDGGRRNFQKARGRGGHMDRGGRGRLQKGKRSDQAFSKKNRKKNPVAMELEDPEKEFKKEKRAARFQHGHGPKKLRMEPLVLQINNMDPSAADNLDWDEIKIVGNSQDITKHYLRLTCAPDPSTVRPVPVLKKSLTMVKADFKNKQDYVFACEQMKSIRQDLTVQGIRTEFTVEVYETHARIALEKGDHEEFNQCQAQLKSLYAENLAGNVGEFTAYRILYYIFTKNSGDLTTELAHLTKELKADACVAHALSLREAWALSNYHRFFKLYRQAPRMSGYLIDKFAERERKAALKAMIKTFRPLLPVSFVQSELAFANEEECQSFLAPLSLVYAGNDASQIDCKLSLAVLPNI</sequence>
<dbReference type="EMBL" id="BC108451">
    <property type="protein sequence ID" value="AAI08452.1"/>
    <property type="molecule type" value="mRNA"/>
</dbReference>
<dbReference type="RefSeq" id="NP_001086433.1">
    <property type="nucleotide sequence ID" value="NM_001092964.1"/>
</dbReference>
<dbReference type="SMR" id="Q32NW2"/>
<dbReference type="DNASU" id="445852"/>
<dbReference type="GeneID" id="445852"/>
<dbReference type="KEGG" id="xla:445852"/>
<dbReference type="AGR" id="Xenbase:XB-GENE-968479"/>
<dbReference type="CTD" id="445852"/>
<dbReference type="Xenbase" id="XB-GENE-968479">
    <property type="gene designation" value="leng8.L"/>
</dbReference>
<dbReference type="OrthoDB" id="199574at2759"/>
<dbReference type="Proteomes" id="UP000186698">
    <property type="component" value="Chromosome 7L"/>
</dbReference>
<dbReference type="Bgee" id="445852">
    <property type="expression patterns" value="Expressed in spleen and 19 other cell types or tissues"/>
</dbReference>
<dbReference type="GO" id="GO:0005634">
    <property type="term" value="C:nucleus"/>
    <property type="evidence" value="ECO:0000318"/>
    <property type="project" value="GO_Central"/>
</dbReference>
<dbReference type="FunFam" id="1.25.40.990:FF:000002">
    <property type="entry name" value="Leukocyte receptor cluster member 8 homolog"/>
    <property type="match status" value="1"/>
</dbReference>
<dbReference type="Gene3D" id="1.25.40.990">
    <property type="match status" value="1"/>
</dbReference>
<dbReference type="InterPro" id="IPR000717">
    <property type="entry name" value="PCI_dom"/>
</dbReference>
<dbReference type="InterPro" id="IPR045107">
    <property type="entry name" value="SAC3/GANP/THP3"/>
</dbReference>
<dbReference type="InterPro" id="IPR005062">
    <property type="entry name" value="SAC3/GANP/THP3_conserved"/>
</dbReference>
<dbReference type="PANTHER" id="PTHR12436">
    <property type="entry name" value="80 KDA MCM3-ASSOCIATED PROTEIN"/>
    <property type="match status" value="1"/>
</dbReference>
<dbReference type="PANTHER" id="PTHR12436:SF4">
    <property type="entry name" value="LEUKOCYTE RECEPTOR CLUSTER MEMBER 8"/>
    <property type="match status" value="1"/>
</dbReference>
<dbReference type="Pfam" id="PF03399">
    <property type="entry name" value="SAC3_GANP"/>
    <property type="match status" value="1"/>
</dbReference>
<dbReference type="PROSITE" id="PS50250">
    <property type="entry name" value="PCI"/>
    <property type="match status" value="1"/>
</dbReference>
<gene>
    <name type="primary">leng8</name>
</gene>
<organism>
    <name type="scientific">Xenopus laevis</name>
    <name type="common">African clawed frog</name>
    <dbReference type="NCBI Taxonomy" id="8355"/>
    <lineage>
        <taxon>Eukaryota</taxon>
        <taxon>Metazoa</taxon>
        <taxon>Chordata</taxon>
        <taxon>Craniata</taxon>
        <taxon>Vertebrata</taxon>
        <taxon>Euteleostomi</taxon>
        <taxon>Amphibia</taxon>
        <taxon>Batrachia</taxon>
        <taxon>Anura</taxon>
        <taxon>Pipoidea</taxon>
        <taxon>Pipidae</taxon>
        <taxon>Xenopodinae</taxon>
        <taxon>Xenopus</taxon>
        <taxon>Xenopus</taxon>
    </lineage>
</organism>
<proteinExistence type="evidence at transcript level"/>